<protein>
    <recommendedName>
        <fullName>X-ray radiation resistance-associated protein 1</fullName>
    </recommendedName>
</protein>
<feature type="chain" id="PRO_0000318131" description="X-ray radiation resistance-associated protein 1">
    <location>
        <begin position="1" status="less than"/>
        <end position="587"/>
    </location>
</feature>
<feature type="repeat" description="LRR 1">
    <location>
        <begin position="24"/>
        <end position="45"/>
    </location>
</feature>
<feature type="repeat" description="LRR 2">
    <location>
        <begin position="49"/>
        <end position="70"/>
    </location>
</feature>
<feature type="region of interest" description="Disordered" evidence="3">
    <location>
        <begin position="337"/>
        <end position="357"/>
    </location>
</feature>
<feature type="region of interest" description="Disordered" evidence="3">
    <location>
        <begin position="373"/>
        <end position="396"/>
    </location>
</feature>
<feature type="coiled-coil region" evidence="2">
    <location>
        <begin position="518"/>
        <end position="540"/>
    </location>
</feature>
<feature type="compositionally biased region" description="Basic and acidic residues" evidence="3">
    <location>
        <begin position="344"/>
        <end position="355"/>
    </location>
</feature>
<feature type="sequence conflict" description="In Ref. 1; BAB62982." evidence="5" ref="1">
    <original>T</original>
    <variation>I</variation>
    <location>
        <position position="389"/>
    </location>
</feature>
<feature type="sequence conflict" description="In Ref. 1; BAB62982." evidence="5" ref="1">
    <original>N</original>
    <variation>D</variation>
    <location>
        <position position="434"/>
    </location>
</feature>
<feature type="sequence conflict" description="In Ref. 1; BAB62982." evidence="5" ref="1">
    <original>Q</original>
    <variation>R</variation>
    <location>
        <position position="537"/>
    </location>
</feature>
<feature type="non-terminal residue" evidence="5">
    <location>
        <position position="1"/>
    </location>
</feature>
<sequence length="587" mass="66521">LAVAEQEASVTSLTSKRYILRFPALETLMLDDNRLSNPSCFASLAGLRRLKKLSLDENRIIRIPYLQQVQLSDESVDWNGGGGSPQKEPQFMLQSKPRMLEDSDEQLDYTVLPMKKDVDRTEVVFSSYPGFSTSETTKICSLPPIFEILPVKSLKARNQTLAPPFPELRYLSLAYNKIAKEDAVLPVALFPSLCEFVFHNNPLVAHTRGVPPLLKSFLQERLGIHLIRRKTVKPKHHVLMSRKESRKVKTEIPKVPKQPLVLHHPQVTTNKSPSKDMLEPEAELAEDLPTTKSTFVESEMPTESLEGLSLSRRTFVPLPPICSDSTVHSEETLSHLSDTAVRLSPEHPSDEDSKSTESIFLTQVSELPSSIIHKDDLELKEKDQKKPPTAPREVKVTRRKLTTASLPSKYHGYEELLTAKPDPAFIEPKGIQKNAQALQHMLKHPLLCHSSKPKLDTLQKPYVPKEKRAQRIPIPPPRKTRTQLLDDIFIRLRDPRNITEAPLGAVLHRRTERRLVNHKQYLEAKRLLKEFQARYRQLVSGSLRTVFGTTPLPPACPALSESQPKFGRFLEFMDEFCQEPTASDSQG</sequence>
<name>XRRA1_MACFA</name>
<dbReference type="EMBL" id="AB070037">
    <property type="protein sequence ID" value="BAB62982.1"/>
    <property type="status" value="ALT_INIT"/>
    <property type="molecule type" value="mRNA"/>
</dbReference>
<dbReference type="EMBL" id="AB072776">
    <property type="protein sequence ID" value="BAB69745.1"/>
    <property type="status" value="ALT_INIT"/>
    <property type="molecule type" value="mRNA"/>
</dbReference>
<dbReference type="RefSeq" id="XP_015290982.1">
    <property type="nucleotide sequence ID" value="XM_015435496.1"/>
</dbReference>
<dbReference type="STRING" id="9541.ENSMFAP00000032924"/>
<dbReference type="eggNOG" id="KOG0619">
    <property type="taxonomic scope" value="Eukaryota"/>
</dbReference>
<dbReference type="Proteomes" id="UP000233100">
    <property type="component" value="Unplaced"/>
</dbReference>
<dbReference type="GO" id="GO:0005737">
    <property type="term" value="C:cytoplasm"/>
    <property type="evidence" value="ECO:0000250"/>
    <property type="project" value="UniProtKB"/>
</dbReference>
<dbReference type="GO" id="GO:0005634">
    <property type="term" value="C:nucleus"/>
    <property type="evidence" value="ECO:0000250"/>
    <property type="project" value="UniProtKB"/>
</dbReference>
<dbReference type="GO" id="GO:0010165">
    <property type="term" value="P:response to X-ray"/>
    <property type="evidence" value="ECO:0000250"/>
    <property type="project" value="UniProtKB"/>
</dbReference>
<dbReference type="FunFam" id="3.80.10.10:FF:002122">
    <property type="entry name" value="X-ray radiation resistance-associated protein 1"/>
    <property type="match status" value="1"/>
</dbReference>
<dbReference type="Gene3D" id="3.80.10.10">
    <property type="entry name" value="Ribonuclease Inhibitor"/>
    <property type="match status" value="1"/>
</dbReference>
<dbReference type="InterPro" id="IPR001611">
    <property type="entry name" value="Leu-rich_rpt"/>
</dbReference>
<dbReference type="InterPro" id="IPR032675">
    <property type="entry name" value="LRR_dom_sf"/>
</dbReference>
<dbReference type="PANTHER" id="PTHR22710">
    <property type="entry name" value="X-RAY RADIATION RESISTANCE ASSOCIATED PROTEIN 1 XRRA1"/>
    <property type="match status" value="1"/>
</dbReference>
<dbReference type="PANTHER" id="PTHR22710:SF2">
    <property type="entry name" value="X-RAY RADIATION RESISTANCE-ASSOCIATED PROTEIN 1"/>
    <property type="match status" value="1"/>
</dbReference>
<dbReference type="SUPFAM" id="SSF52058">
    <property type="entry name" value="L domain-like"/>
    <property type="match status" value="1"/>
</dbReference>
<dbReference type="PROSITE" id="PS51450">
    <property type="entry name" value="LRR"/>
    <property type="match status" value="3"/>
</dbReference>
<comment type="function">
    <text evidence="1">May be involved in the response of cells to X-ray radiation.</text>
</comment>
<comment type="subcellular location">
    <subcellularLocation>
        <location evidence="1">Cytoplasm</location>
    </subcellularLocation>
    <subcellularLocation>
        <location evidence="1">Nucleus</location>
    </subcellularLocation>
</comment>
<comment type="tissue specificity">
    <text evidence="4">Expressed predominantly in testis.</text>
</comment>
<comment type="sequence caution" evidence="5">
    <conflict type="erroneous initiation">
        <sequence resource="EMBL-CDS" id="BAB62982"/>
    </conflict>
</comment>
<comment type="sequence caution" evidence="5">
    <conflict type="erroneous initiation">
        <sequence resource="EMBL-CDS" id="BAB69745"/>
    </conflict>
</comment>
<proteinExistence type="evidence at transcript level"/>
<evidence type="ECO:0000250" key="1">
    <source>
        <dbReference type="UniProtKB" id="Q6P2D8"/>
    </source>
</evidence>
<evidence type="ECO:0000255" key="2"/>
<evidence type="ECO:0000256" key="3">
    <source>
        <dbReference type="SAM" id="MobiDB-lite"/>
    </source>
</evidence>
<evidence type="ECO:0000269" key="4">
    <source>
    </source>
</evidence>
<evidence type="ECO:0000305" key="5"/>
<evidence type="ECO:0000312" key="6">
    <source>
        <dbReference type="EMBL" id="BAB69745.1"/>
    </source>
</evidence>
<gene>
    <name evidence="6" type="primary">XRRA1</name>
    <name type="ORF">QtsA-12093</name>
    <name type="ORF">QtsA-20433</name>
</gene>
<keyword id="KW-0175">Coiled coil</keyword>
<keyword id="KW-0963">Cytoplasm</keyword>
<keyword id="KW-0433">Leucine-rich repeat</keyword>
<keyword id="KW-0539">Nucleus</keyword>
<keyword id="KW-1185">Reference proteome</keyword>
<keyword id="KW-0677">Repeat</keyword>
<reference evidence="6" key="1">
    <citation type="journal article" date="2002" name="BMC Genomics">
        <title>Cynomolgus monkey testicular cDNAs for discovery of novel human genes in the human genome sequence.</title>
        <authorList>
            <person name="Osada N."/>
            <person name="Hida M."/>
            <person name="Kusuda J."/>
            <person name="Tanuma R."/>
            <person name="Hirata M."/>
            <person name="Suto Y."/>
            <person name="Hirai M."/>
            <person name="Terao K."/>
            <person name="Sugano S."/>
            <person name="Hashimoto K."/>
        </authorList>
    </citation>
    <scope>NUCLEOTIDE SEQUENCE [LARGE SCALE MRNA]</scope>
    <source>
        <tissue evidence="6">Testis</tissue>
    </source>
</reference>
<reference evidence="5" key="2">
    <citation type="journal article" date="2003" name="BMC Genomics">
        <title>Molecular cloning, genomic characterization and over-expression of a novel gene, XRRA1, identified from human colorectal cancer cell HCT116Clone2_XRR and macaque testis.</title>
        <authorList>
            <person name="Mesak F.M."/>
            <person name="Osada N."/>
            <person name="Hashimoto K."/>
            <person name="Liu Q.Y."/>
            <person name="Ng C.E."/>
        </authorList>
    </citation>
    <scope>TISSUE SPECIFICITY</scope>
</reference>
<organism>
    <name type="scientific">Macaca fascicularis</name>
    <name type="common">Crab-eating macaque</name>
    <name type="synonym">Cynomolgus monkey</name>
    <dbReference type="NCBI Taxonomy" id="9541"/>
    <lineage>
        <taxon>Eukaryota</taxon>
        <taxon>Metazoa</taxon>
        <taxon>Chordata</taxon>
        <taxon>Craniata</taxon>
        <taxon>Vertebrata</taxon>
        <taxon>Euteleostomi</taxon>
        <taxon>Mammalia</taxon>
        <taxon>Eutheria</taxon>
        <taxon>Euarchontoglires</taxon>
        <taxon>Primates</taxon>
        <taxon>Haplorrhini</taxon>
        <taxon>Catarrhini</taxon>
        <taxon>Cercopithecidae</taxon>
        <taxon>Cercopithecinae</taxon>
        <taxon>Macaca</taxon>
    </lineage>
</organism>
<accession>Q95LL2</accession>
<accession>Q95JZ0</accession>